<reference key="1">
    <citation type="journal article" date="2006" name="Mol. Biol. Evol.">
        <title>The complete chloroplast genome sequence of Pelargonium x hortorum: organization and evolution of the largest and most highly rearranged chloroplast genome of land plants.</title>
        <authorList>
            <person name="Chumley T.W."/>
            <person name="Palmer J.D."/>
            <person name="Mower J.P."/>
            <person name="Fourcade H.M."/>
            <person name="Calie P.J."/>
            <person name="Boore J.L."/>
            <person name="Jansen R.K."/>
        </authorList>
    </citation>
    <scope>NUCLEOTIDE SEQUENCE [LARGE SCALE GENOMIC DNA]</scope>
    <source>
        <strain>cv. Ringo White</strain>
    </source>
</reference>
<name>NU4C_PELHO</name>
<accession>Q06FQ4</accession>
<comment type="catalytic activity">
    <reaction evidence="2">
        <text>a plastoquinone + NADH + (n+1) H(+)(in) = a plastoquinol + NAD(+) + n H(+)(out)</text>
        <dbReference type="Rhea" id="RHEA:42608"/>
        <dbReference type="Rhea" id="RHEA-COMP:9561"/>
        <dbReference type="Rhea" id="RHEA-COMP:9562"/>
        <dbReference type="ChEBI" id="CHEBI:15378"/>
        <dbReference type="ChEBI" id="CHEBI:17757"/>
        <dbReference type="ChEBI" id="CHEBI:57540"/>
        <dbReference type="ChEBI" id="CHEBI:57945"/>
        <dbReference type="ChEBI" id="CHEBI:62192"/>
    </reaction>
</comment>
<comment type="catalytic activity">
    <reaction evidence="2">
        <text>a plastoquinone + NADPH + (n+1) H(+)(in) = a plastoquinol + NADP(+) + n H(+)(out)</text>
        <dbReference type="Rhea" id="RHEA:42612"/>
        <dbReference type="Rhea" id="RHEA-COMP:9561"/>
        <dbReference type="Rhea" id="RHEA-COMP:9562"/>
        <dbReference type="ChEBI" id="CHEBI:15378"/>
        <dbReference type="ChEBI" id="CHEBI:17757"/>
        <dbReference type="ChEBI" id="CHEBI:57783"/>
        <dbReference type="ChEBI" id="CHEBI:58349"/>
        <dbReference type="ChEBI" id="CHEBI:62192"/>
    </reaction>
</comment>
<comment type="subcellular location">
    <subcellularLocation>
        <location evidence="2">Plastid</location>
        <location evidence="2">Chloroplast thylakoid membrane</location>
        <topology evidence="2">Multi-pass membrane protein</topology>
    </subcellularLocation>
</comment>
<comment type="RNA editing">
    <location>
        <position position="1" evidence="1"/>
    </location>
    <text evidence="1">The initiator methionine is created by RNA editing.</text>
</comment>
<comment type="similarity">
    <text evidence="2">Belongs to the complex I subunit 4 family.</text>
</comment>
<evidence type="ECO:0000250" key="1"/>
<evidence type="ECO:0000255" key="2">
    <source>
        <dbReference type="HAMAP-Rule" id="MF_00491"/>
    </source>
</evidence>
<organism>
    <name type="scientific">Pelargonium hortorum</name>
    <name type="common">Common geranium</name>
    <name type="synonym">Pelargonium inquinans x Pelargonium zonale</name>
    <dbReference type="NCBI Taxonomy" id="4031"/>
    <lineage>
        <taxon>Eukaryota</taxon>
        <taxon>Viridiplantae</taxon>
        <taxon>Streptophyta</taxon>
        <taxon>Embryophyta</taxon>
        <taxon>Tracheophyta</taxon>
        <taxon>Spermatophyta</taxon>
        <taxon>Magnoliopsida</taxon>
        <taxon>eudicotyledons</taxon>
        <taxon>Gunneridae</taxon>
        <taxon>Pentapetalae</taxon>
        <taxon>rosids</taxon>
        <taxon>malvids</taxon>
        <taxon>Geraniales</taxon>
        <taxon>Geraniaceae</taxon>
        <taxon>Pelargonium</taxon>
    </lineage>
</organism>
<proteinExistence type="inferred from homology"/>
<sequence length="500" mass="55962">MNDFPWLTLIVIFPISAGSFLFFLPHRGNKVTKWYTLCVCSLELLLTTYTFCYHFQLDDPLIQLVEDSKWIFFFHFDWRLGIDGLSFGPILLTGFITTLATLAAWPVTRDSRLFHFMMLAMYSGQIGSFSSQDLLLFFMMWELELIPVYLLLSMWGGKKRLYSATKFILYTAGSSIFLLIGVLGIGLYGSNEPTFNFEISAHRSYPAALEIIFYIGFLIAFAVKSPIIPLHTWLPDTHGEAHYSTCMLLAGILLKMGAYGLVRINMELLPHAHSIFAPYLIIVGAIQIVYAASTSLGQRNLKKRIAYSSVSHMGFIIIGIGSITDAGLSGALLQIISHGFIGAALFFLAGTSYDRIRLGFFDEMGGMAVAIPKIFTMFSILSMASLALPGMSGFVAELIVFFGIITSQKFLLMPKILITFVMAIGMILTPIYSLSMLRQMFYGYRLFNAPNPSFFDSGPRELFVSISILLPVIGMGIYPDFLLSLSVDKVELIVSQFFYR</sequence>
<feature type="chain" id="PRO_0000275918" description="NAD(P)H-quinone oxidoreductase chain 4, chloroplastic">
    <location>
        <begin position="1"/>
        <end position="500"/>
    </location>
</feature>
<feature type="transmembrane region" description="Helical" evidence="2">
    <location>
        <begin position="4"/>
        <end position="24"/>
    </location>
</feature>
<feature type="transmembrane region" description="Helical" evidence="2">
    <location>
        <begin position="35"/>
        <end position="55"/>
    </location>
</feature>
<feature type="transmembrane region" description="Helical" evidence="2">
    <location>
        <begin position="87"/>
        <end position="107"/>
    </location>
</feature>
<feature type="transmembrane region" description="Helical" evidence="2">
    <location>
        <begin position="134"/>
        <end position="154"/>
    </location>
</feature>
<feature type="transmembrane region" description="Helical" evidence="2">
    <location>
        <begin position="167"/>
        <end position="187"/>
    </location>
</feature>
<feature type="transmembrane region" description="Helical" evidence="2">
    <location>
        <begin position="208"/>
        <end position="228"/>
    </location>
</feature>
<feature type="transmembrane region" description="Helical" evidence="2">
    <location>
        <begin position="242"/>
        <end position="262"/>
    </location>
</feature>
<feature type="transmembrane region" description="Helical" evidence="2">
    <location>
        <begin position="272"/>
        <end position="292"/>
    </location>
</feature>
<feature type="transmembrane region" description="Helical" evidence="2">
    <location>
        <begin position="305"/>
        <end position="325"/>
    </location>
</feature>
<feature type="transmembrane region" description="Helical" evidence="2">
    <location>
        <begin position="330"/>
        <end position="350"/>
    </location>
</feature>
<feature type="transmembrane region" description="Helical" evidence="2">
    <location>
        <begin position="364"/>
        <end position="384"/>
    </location>
</feature>
<feature type="transmembrane region" description="Helical" evidence="2">
    <location>
        <begin position="386"/>
        <end position="406"/>
    </location>
</feature>
<feature type="transmembrane region" description="Helical" evidence="2">
    <location>
        <begin position="416"/>
        <end position="436"/>
    </location>
</feature>
<feature type="transmembrane region" description="Helical" evidence="2">
    <location>
        <begin position="462"/>
        <end position="482"/>
    </location>
</feature>
<keyword id="KW-0150">Chloroplast</keyword>
<keyword id="KW-0472">Membrane</keyword>
<keyword id="KW-0520">NAD</keyword>
<keyword id="KW-0521">NADP</keyword>
<keyword id="KW-0934">Plastid</keyword>
<keyword id="KW-0618">Plastoquinone</keyword>
<keyword id="KW-0874">Quinone</keyword>
<keyword id="KW-0691">RNA editing</keyword>
<keyword id="KW-0793">Thylakoid</keyword>
<keyword id="KW-1278">Translocase</keyword>
<keyword id="KW-0812">Transmembrane</keyword>
<keyword id="KW-1133">Transmembrane helix</keyword>
<geneLocation type="chloroplast"/>
<dbReference type="EC" id="7.1.1.-" evidence="2"/>
<dbReference type="EMBL" id="DQ897681">
    <property type="protein sequence ID" value="ABI17318.1"/>
    <property type="status" value="ALT_SEQ"/>
    <property type="molecule type" value="Genomic_DNA"/>
</dbReference>
<dbReference type="RefSeq" id="YP_784127.2">
    <property type="nucleotide sequence ID" value="NC_008454.1"/>
</dbReference>
<dbReference type="SMR" id="Q06FQ4"/>
<dbReference type="GeneID" id="4362880"/>
<dbReference type="GO" id="GO:0009535">
    <property type="term" value="C:chloroplast thylakoid membrane"/>
    <property type="evidence" value="ECO:0007669"/>
    <property type="project" value="UniProtKB-SubCell"/>
</dbReference>
<dbReference type="GO" id="GO:0008137">
    <property type="term" value="F:NADH dehydrogenase (ubiquinone) activity"/>
    <property type="evidence" value="ECO:0007669"/>
    <property type="project" value="InterPro"/>
</dbReference>
<dbReference type="GO" id="GO:0048039">
    <property type="term" value="F:ubiquinone binding"/>
    <property type="evidence" value="ECO:0007669"/>
    <property type="project" value="TreeGrafter"/>
</dbReference>
<dbReference type="GO" id="GO:0042773">
    <property type="term" value="P:ATP synthesis coupled electron transport"/>
    <property type="evidence" value="ECO:0007669"/>
    <property type="project" value="InterPro"/>
</dbReference>
<dbReference type="GO" id="GO:0015990">
    <property type="term" value="P:electron transport coupled proton transport"/>
    <property type="evidence" value="ECO:0007669"/>
    <property type="project" value="TreeGrafter"/>
</dbReference>
<dbReference type="HAMAP" id="MF_00491">
    <property type="entry name" value="NDH1_NuoM"/>
    <property type="match status" value="1"/>
</dbReference>
<dbReference type="InterPro" id="IPR022997">
    <property type="entry name" value="NADH_Q_OxRdtase_chain4"/>
</dbReference>
<dbReference type="InterPro" id="IPR010227">
    <property type="entry name" value="NADH_Q_OxRdtase_chainM/4"/>
</dbReference>
<dbReference type="InterPro" id="IPR003918">
    <property type="entry name" value="NADH_UbQ_OxRdtase"/>
</dbReference>
<dbReference type="InterPro" id="IPR001750">
    <property type="entry name" value="ND/Mrp_TM"/>
</dbReference>
<dbReference type="NCBIfam" id="TIGR01972">
    <property type="entry name" value="NDH_I_M"/>
    <property type="match status" value="1"/>
</dbReference>
<dbReference type="PANTHER" id="PTHR43507:SF21">
    <property type="entry name" value="NAD(P)H-QUINONE OXIDOREDUCTASE CHAIN 4, CHLOROPLASTIC"/>
    <property type="match status" value="1"/>
</dbReference>
<dbReference type="PANTHER" id="PTHR43507">
    <property type="entry name" value="NADH-UBIQUINONE OXIDOREDUCTASE CHAIN 4"/>
    <property type="match status" value="1"/>
</dbReference>
<dbReference type="Pfam" id="PF00361">
    <property type="entry name" value="Proton_antipo_M"/>
    <property type="match status" value="1"/>
</dbReference>
<dbReference type="PRINTS" id="PR01437">
    <property type="entry name" value="NUOXDRDTASE4"/>
</dbReference>
<gene>
    <name evidence="2" type="primary">ndhD</name>
</gene>
<protein>
    <recommendedName>
        <fullName evidence="2">NAD(P)H-quinone oxidoreductase chain 4, chloroplastic</fullName>
        <ecNumber evidence="2">7.1.1.-</ecNumber>
    </recommendedName>
    <alternativeName>
        <fullName evidence="2">NAD(P)H dehydrogenase, chain 4</fullName>
    </alternativeName>
    <alternativeName>
        <fullName evidence="2">NADH-plastoquinone oxidoreductase chain 4</fullName>
    </alternativeName>
</protein>